<sequence>MKKGFFITIEGPDGAGKTSLLDNLMPALRDIFGDNLIETREPGGVRISEAIRKIVLGLKYPEMNRRTEALLFAAARAQHMVEKIEPALADGKIVLSDRFVDSSIAYQGGGRELGIEAVGEINNFATNGLQPNLTLLLDLPSEVGIARIMKHRSDEVNRLDKDRLVFHKKVRQTYLQLAKDQPNRIKVLDATQSPEKIAINALQLIQESLKGWI</sequence>
<evidence type="ECO:0000255" key="1">
    <source>
        <dbReference type="HAMAP-Rule" id="MF_00165"/>
    </source>
</evidence>
<protein>
    <recommendedName>
        <fullName evidence="1">Thymidylate kinase</fullName>
        <ecNumber evidence="1">2.7.4.9</ecNumber>
    </recommendedName>
    <alternativeName>
        <fullName evidence="1">dTMP kinase</fullName>
    </alternativeName>
</protein>
<proteinExistence type="inferred from homology"/>
<organism>
    <name type="scientific">Oenococcus oeni (strain ATCC BAA-331 / PSU-1)</name>
    <dbReference type="NCBI Taxonomy" id="203123"/>
    <lineage>
        <taxon>Bacteria</taxon>
        <taxon>Bacillati</taxon>
        <taxon>Bacillota</taxon>
        <taxon>Bacilli</taxon>
        <taxon>Lactobacillales</taxon>
        <taxon>Lactobacillaceae</taxon>
        <taxon>Oenococcus</taxon>
    </lineage>
</organism>
<accession>Q04E53</accession>
<feature type="chain" id="PRO_1000023238" description="Thymidylate kinase">
    <location>
        <begin position="1"/>
        <end position="213"/>
    </location>
</feature>
<feature type="binding site" evidence="1">
    <location>
        <begin position="11"/>
        <end position="18"/>
    </location>
    <ligand>
        <name>ATP</name>
        <dbReference type="ChEBI" id="CHEBI:30616"/>
    </ligand>
</feature>
<dbReference type="EC" id="2.7.4.9" evidence="1"/>
<dbReference type="EMBL" id="CP000411">
    <property type="protein sequence ID" value="ABJ57269.1"/>
    <property type="molecule type" value="Genomic_DNA"/>
</dbReference>
<dbReference type="RefSeq" id="WP_002820789.1">
    <property type="nucleotide sequence ID" value="NC_008528.1"/>
</dbReference>
<dbReference type="SMR" id="Q04E53"/>
<dbReference type="STRING" id="203123.OEOE_1407"/>
<dbReference type="GeneID" id="75066305"/>
<dbReference type="KEGG" id="ooe:OEOE_1407"/>
<dbReference type="eggNOG" id="COG0125">
    <property type="taxonomic scope" value="Bacteria"/>
</dbReference>
<dbReference type="HOGENOM" id="CLU_049131_0_2_9"/>
<dbReference type="Proteomes" id="UP000000774">
    <property type="component" value="Chromosome"/>
</dbReference>
<dbReference type="GO" id="GO:0005829">
    <property type="term" value="C:cytosol"/>
    <property type="evidence" value="ECO:0007669"/>
    <property type="project" value="TreeGrafter"/>
</dbReference>
<dbReference type="GO" id="GO:0005524">
    <property type="term" value="F:ATP binding"/>
    <property type="evidence" value="ECO:0007669"/>
    <property type="project" value="UniProtKB-UniRule"/>
</dbReference>
<dbReference type="GO" id="GO:0004798">
    <property type="term" value="F:dTMP kinase activity"/>
    <property type="evidence" value="ECO:0007669"/>
    <property type="project" value="UniProtKB-UniRule"/>
</dbReference>
<dbReference type="GO" id="GO:0006233">
    <property type="term" value="P:dTDP biosynthetic process"/>
    <property type="evidence" value="ECO:0007669"/>
    <property type="project" value="InterPro"/>
</dbReference>
<dbReference type="GO" id="GO:0006235">
    <property type="term" value="P:dTTP biosynthetic process"/>
    <property type="evidence" value="ECO:0007669"/>
    <property type="project" value="UniProtKB-UniRule"/>
</dbReference>
<dbReference type="GO" id="GO:0006227">
    <property type="term" value="P:dUDP biosynthetic process"/>
    <property type="evidence" value="ECO:0007669"/>
    <property type="project" value="TreeGrafter"/>
</dbReference>
<dbReference type="CDD" id="cd01672">
    <property type="entry name" value="TMPK"/>
    <property type="match status" value="1"/>
</dbReference>
<dbReference type="FunFam" id="3.40.50.300:FF:000225">
    <property type="entry name" value="Thymidylate kinase"/>
    <property type="match status" value="1"/>
</dbReference>
<dbReference type="Gene3D" id="3.40.50.300">
    <property type="entry name" value="P-loop containing nucleotide triphosphate hydrolases"/>
    <property type="match status" value="1"/>
</dbReference>
<dbReference type="HAMAP" id="MF_00165">
    <property type="entry name" value="Thymidylate_kinase"/>
    <property type="match status" value="1"/>
</dbReference>
<dbReference type="InterPro" id="IPR027417">
    <property type="entry name" value="P-loop_NTPase"/>
</dbReference>
<dbReference type="InterPro" id="IPR039430">
    <property type="entry name" value="Thymidylate_kin-like_dom"/>
</dbReference>
<dbReference type="InterPro" id="IPR018095">
    <property type="entry name" value="Thymidylate_kin_CS"/>
</dbReference>
<dbReference type="InterPro" id="IPR018094">
    <property type="entry name" value="Thymidylate_kinase"/>
</dbReference>
<dbReference type="NCBIfam" id="TIGR00041">
    <property type="entry name" value="DTMP_kinase"/>
    <property type="match status" value="1"/>
</dbReference>
<dbReference type="PANTHER" id="PTHR10344">
    <property type="entry name" value="THYMIDYLATE KINASE"/>
    <property type="match status" value="1"/>
</dbReference>
<dbReference type="PANTHER" id="PTHR10344:SF4">
    <property type="entry name" value="UMP-CMP KINASE 2, MITOCHONDRIAL"/>
    <property type="match status" value="1"/>
</dbReference>
<dbReference type="Pfam" id="PF02223">
    <property type="entry name" value="Thymidylate_kin"/>
    <property type="match status" value="1"/>
</dbReference>
<dbReference type="SUPFAM" id="SSF52540">
    <property type="entry name" value="P-loop containing nucleoside triphosphate hydrolases"/>
    <property type="match status" value="1"/>
</dbReference>
<dbReference type="PROSITE" id="PS01331">
    <property type="entry name" value="THYMIDYLATE_KINASE"/>
    <property type="match status" value="1"/>
</dbReference>
<keyword id="KW-0067">ATP-binding</keyword>
<keyword id="KW-0418">Kinase</keyword>
<keyword id="KW-0545">Nucleotide biosynthesis</keyword>
<keyword id="KW-0547">Nucleotide-binding</keyword>
<keyword id="KW-1185">Reference proteome</keyword>
<keyword id="KW-0808">Transferase</keyword>
<gene>
    <name evidence="1" type="primary">tmk</name>
    <name type="ordered locus">OEOE_1407</name>
</gene>
<comment type="function">
    <text evidence="1">Phosphorylation of dTMP to form dTDP in both de novo and salvage pathways of dTTP synthesis.</text>
</comment>
<comment type="catalytic activity">
    <reaction evidence="1">
        <text>dTMP + ATP = dTDP + ADP</text>
        <dbReference type="Rhea" id="RHEA:13517"/>
        <dbReference type="ChEBI" id="CHEBI:30616"/>
        <dbReference type="ChEBI" id="CHEBI:58369"/>
        <dbReference type="ChEBI" id="CHEBI:63528"/>
        <dbReference type="ChEBI" id="CHEBI:456216"/>
        <dbReference type="EC" id="2.7.4.9"/>
    </reaction>
</comment>
<comment type="similarity">
    <text evidence="1">Belongs to the thymidylate kinase family.</text>
</comment>
<reference key="1">
    <citation type="journal article" date="2006" name="Proc. Natl. Acad. Sci. U.S.A.">
        <title>Comparative genomics of the lactic acid bacteria.</title>
        <authorList>
            <person name="Makarova K.S."/>
            <person name="Slesarev A."/>
            <person name="Wolf Y.I."/>
            <person name="Sorokin A."/>
            <person name="Mirkin B."/>
            <person name="Koonin E.V."/>
            <person name="Pavlov A."/>
            <person name="Pavlova N."/>
            <person name="Karamychev V."/>
            <person name="Polouchine N."/>
            <person name="Shakhova V."/>
            <person name="Grigoriev I."/>
            <person name="Lou Y."/>
            <person name="Rohksar D."/>
            <person name="Lucas S."/>
            <person name="Huang K."/>
            <person name="Goodstein D.M."/>
            <person name="Hawkins T."/>
            <person name="Plengvidhya V."/>
            <person name="Welker D."/>
            <person name="Hughes J."/>
            <person name="Goh Y."/>
            <person name="Benson A."/>
            <person name="Baldwin K."/>
            <person name="Lee J.-H."/>
            <person name="Diaz-Muniz I."/>
            <person name="Dosti B."/>
            <person name="Smeianov V."/>
            <person name="Wechter W."/>
            <person name="Barabote R."/>
            <person name="Lorca G."/>
            <person name="Altermann E."/>
            <person name="Barrangou R."/>
            <person name="Ganesan B."/>
            <person name="Xie Y."/>
            <person name="Rawsthorne H."/>
            <person name="Tamir D."/>
            <person name="Parker C."/>
            <person name="Breidt F."/>
            <person name="Broadbent J.R."/>
            <person name="Hutkins R."/>
            <person name="O'Sullivan D."/>
            <person name="Steele J."/>
            <person name="Unlu G."/>
            <person name="Saier M.H. Jr."/>
            <person name="Klaenhammer T."/>
            <person name="Richardson P."/>
            <person name="Kozyavkin S."/>
            <person name="Weimer B.C."/>
            <person name="Mills D.A."/>
        </authorList>
    </citation>
    <scope>NUCLEOTIDE SEQUENCE [LARGE SCALE GENOMIC DNA]</scope>
    <source>
        <strain>ATCC BAA-331 / PSU-1</strain>
    </source>
</reference>
<name>KTHY_OENOB</name>